<keyword id="KW-0997">Cell inner membrane</keyword>
<keyword id="KW-1003">Cell membrane</keyword>
<keyword id="KW-0472">Membrane</keyword>
<keyword id="KW-1185">Reference proteome</keyword>
<keyword id="KW-0812">Transmembrane</keyword>
<keyword id="KW-1133">Transmembrane helix</keyword>
<dbReference type="EMBL" id="AE005174">
    <property type="protein sequence ID" value="AAG57296.1"/>
    <property type="molecule type" value="Genomic_DNA"/>
</dbReference>
<dbReference type="EMBL" id="BA000007">
    <property type="protein sequence ID" value="BAB36473.1"/>
    <property type="molecule type" value="Genomic_DNA"/>
</dbReference>
<dbReference type="PIR" id="B91010">
    <property type="entry name" value="B91010"/>
</dbReference>
<dbReference type="RefSeq" id="NP_311077.1">
    <property type="nucleotide sequence ID" value="NC_002695.1"/>
</dbReference>
<dbReference type="RefSeq" id="WP_000182053.1">
    <property type="nucleotide sequence ID" value="NZ_VOAI01000001.1"/>
</dbReference>
<dbReference type="SMR" id="P62724"/>
<dbReference type="STRING" id="155864.Z3415"/>
<dbReference type="GeneID" id="916754"/>
<dbReference type="KEGG" id="ece:Z3415"/>
<dbReference type="KEGG" id="ecs:ECs_3050"/>
<dbReference type="PATRIC" id="fig|386585.9.peg.3179"/>
<dbReference type="eggNOG" id="COG2855">
    <property type="taxonomic scope" value="Bacteria"/>
</dbReference>
<dbReference type="HOGENOM" id="CLU_033541_0_0_6"/>
<dbReference type="OMA" id="LTRALWI"/>
<dbReference type="Proteomes" id="UP000000558">
    <property type="component" value="Chromosome"/>
</dbReference>
<dbReference type="Proteomes" id="UP000002519">
    <property type="component" value="Chromosome"/>
</dbReference>
<dbReference type="GO" id="GO:0005886">
    <property type="term" value="C:plasma membrane"/>
    <property type="evidence" value="ECO:0007669"/>
    <property type="project" value="UniProtKB-SubCell"/>
</dbReference>
<dbReference type="InterPro" id="IPR018383">
    <property type="entry name" value="UPF0324_pro"/>
</dbReference>
<dbReference type="InterPro" id="IPR004630">
    <property type="entry name" value="UPF0324_YeiH-like"/>
</dbReference>
<dbReference type="NCBIfam" id="TIGR00698">
    <property type="entry name" value="YeiH family putative sulfate export transporter"/>
    <property type="match status" value="1"/>
</dbReference>
<dbReference type="PANTHER" id="PTHR30106">
    <property type="entry name" value="INNER MEMBRANE PROTEIN YEIH-RELATED"/>
    <property type="match status" value="1"/>
</dbReference>
<dbReference type="PANTHER" id="PTHR30106:SF2">
    <property type="entry name" value="UPF0324 INNER MEMBRANE PROTEIN YEIH"/>
    <property type="match status" value="1"/>
</dbReference>
<dbReference type="Pfam" id="PF03601">
    <property type="entry name" value="Cons_hypoth698"/>
    <property type="match status" value="1"/>
</dbReference>
<gene>
    <name type="primary">yeiH</name>
    <name type="ordered locus">Z3415</name>
    <name type="ordered locus">ECs3050</name>
</gene>
<feature type="chain" id="PRO_0000157415" description="UPF0324 inner membrane protein YeiH">
    <location>
        <begin position="1"/>
        <end position="349"/>
    </location>
</feature>
<feature type="topological domain" description="Periplasmic" evidence="2">
    <location>
        <begin position="1"/>
        <end position="12"/>
    </location>
</feature>
<feature type="transmembrane region" description="Helical" evidence="2">
    <location>
        <begin position="13"/>
        <end position="32"/>
    </location>
</feature>
<feature type="topological domain" description="Cytoplasmic" evidence="2">
    <location>
        <begin position="33"/>
        <end position="35"/>
    </location>
</feature>
<feature type="transmembrane region" description="Helical" evidence="2">
    <location>
        <begin position="36"/>
        <end position="58"/>
    </location>
</feature>
<feature type="topological domain" description="Periplasmic" evidence="2">
    <location>
        <begin position="59"/>
        <end position="99"/>
    </location>
</feature>
<feature type="transmembrane region" description="Helical" evidence="2">
    <location>
        <begin position="100"/>
        <end position="122"/>
    </location>
</feature>
<feature type="topological domain" description="Cytoplasmic" evidence="2">
    <location>
        <begin position="123"/>
        <end position="131"/>
    </location>
</feature>
<feature type="transmembrane region" description="Helical" evidence="2">
    <location>
        <begin position="132"/>
        <end position="151"/>
    </location>
</feature>
<feature type="topological domain" description="Periplasmic" evidence="2">
    <location>
        <begin position="152"/>
        <end position="162"/>
    </location>
</feature>
<feature type="transmembrane region" description="Helical" evidence="2">
    <location>
        <begin position="163"/>
        <end position="185"/>
    </location>
</feature>
<feature type="topological domain" description="Cytoplasmic" evidence="2">
    <location>
        <begin position="186"/>
        <end position="261"/>
    </location>
</feature>
<feature type="transmembrane region" description="Helical" evidence="2">
    <location>
        <begin position="262"/>
        <end position="283"/>
    </location>
</feature>
<feature type="topological domain" description="Periplasmic" evidence="2">
    <location>
        <begin position="284"/>
        <end position="289"/>
    </location>
</feature>
<feature type="transmembrane region" description="Helical" evidence="2">
    <location>
        <begin position="290"/>
        <end position="312"/>
    </location>
</feature>
<feature type="topological domain" description="Cytoplasmic" evidence="2">
    <location>
        <begin position="313"/>
        <end position="321"/>
    </location>
</feature>
<feature type="transmembrane region" description="Helical" evidence="2">
    <location>
        <begin position="322"/>
        <end position="344"/>
    </location>
</feature>
<feature type="topological domain" description="Periplasmic" evidence="2">
    <location>
        <begin position="345"/>
        <end position="349"/>
    </location>
</feature>
<reference key="1">
    <citation type="journal article" date="2001" name="Nature">
        <title>Genome sequence of enterohaemorrhagic Escherichia coli O157:H7.</title>
        <authorList>
            <person name="Perna N.T."/>
            <person name="Plunkett G. III"/>
            <person name="Burland V."/>
            <person name="Mau B."/>
            <person name="Glasner J.D."/>
            <person name="Rose D.J."/>
            <person name="Mayhew G.F."/>
            <person name="Evans P.S."/>
            <person name="Gregor J."/>
            <person name="Kirkpatrick H.A."/>
            <person name="Posfai G."/>
            <person name="Hackett J."/>
            <person name="Klink S."/>
            <person name="Boutin A."/>
            <person name="Shao Y."/>
            <person name="Miller L."/>
            <person name="Grotbeck E.J."/>
            <person name="Davis N.W."/>
            <person name="Lim A."/>
            <person name="Dimalanta E.T."/>
            <person name="Potamousis K."/>
            <person name="Apodaca J."/>
            <person name="Anantharaman T.S."/>
            <person name="Lin J."/>
            <person name="Yen G."/>
            <person name="Schwartz D.C."/>
            <person name="Welch R.A."/>
            <person name="Blattner F.R."/>
        </authorList>
    </citation>
    <scope>NUCLEOTIDE SEQUENCE [LARGE SCALE GENOMIC DNA]</scope>
    <source>
        <strain>O157:H7 / EDL933 / ATCC 700927 / EHEC</strain>
    </source>
</reference>
<reference key="2">
    <citation type="journal article" date="2001" name="DNA Res.">
        <title>Complete genome sequence of enterohemorrhagic Escherichia coli O157:H7 and genomic comparison with a laboratory strain K-12.</title>
        <authorList>
            <person name="Hayashi T."/>
            <person name="Makino K."/>
            <person name="Ohnishi M."/>
            <person name="Kurokawa K."/>
            <person name="Ishii K."/>
            <person name="Yokoyama K."/>
            <person name="Han C.-G."/>
            <person name="Ohtsubo E."/>
            <person name="Nakayama K."/>
            <person name="Murata T."/>
            <person name="Tanaka M."/>
            <person name="Tobe T."/>
            <person name="Iida T."/>
            <person name="Takami H."/>
            <person name="Honda T."/>
            <person name="Sasakawa C."/>
            <person name="Ogasawara N."/>
            <person name="Yasunaga T."/>
            <person name="Kuhara S."/>
            <person name="Shiba T."/>
            <person name="Hattori M."/>
            <person name="Shinagawa H."/>
        </authorList>
    </citation>
    <scope>NUCLEOTIDE SEQUENCE [LARGE SCALE GENOMIC DNA]</scope>
    <source>
        <strain>O157:H7 / Sakai / RIMD 0509952 / EHEC</strain>
    </source>
</reference>
<name>YEIH_ECO57</name>
<organism>
    <name type="scientific">Escherichia coli O157:H7</name>
    <dbReference type="NCBI Taxonomy" id="83334"/>
    <lineage>
        <taxon>Bacteria</taxon>
        <taxon>Pseudomonadati</taxon>
        <taxon>Pseudomonadota</taxon>
        <taxon>Gammaproteobacteria</taxon>
        <taxon>Enterobacterales</taxon>
        <taxon>Enterobacteriaceae</taxon>
        <taxon>Escherichia</taxon>
    </lineage>
</organism>
<accession>P62724</accession>
<accession>P33019</accession>
<protein>
    <recommendedName>
        <fullName>UPF0324 inner membrane protein YeiH</fullName>
    </recommendedName>
</protein>
<comment type="subcellular location">
    <subcellularLocation>
        <location evidence="1">Cell inner membrane</location>
        <topology evidence="1">Multi-pass membrane protein</topology>
    </subcellularLocation>
</comment>
<comment type="similarity">
    <text evidence="3">Belongs to the UPF0324 family.</text>
</comment>
<proteinExistence type="inferred from homology"/>
<sequence>MTNITLQKQHRTLWHFIPGLALSAVITGVALWGGSIPAVAGAGFSALTLAILLGMVLGNTIYPHIWKSCDGGVLFAKQYLLRLGIILYGFRLTFSQIADVGISGIIIDVLTLSSTFLLACFLGQKVFGLDKHTSWLIGAGSSICGAAAVLATEPVVKAEASKVTVAVATVVIFGTVAIFLYPAIYPLMSQWFSPETFGIYIGSTVHEVAQVVAAGHAISPDAENAAVISKMLRVMMLAPFLILLAARVKQLSGANSGEKSKITIPWFAILFIVVAIFNSFHLLPQSVVNMLVTLDTFLLAMAMAALGLTTHVSALKKAGAKPLLMALVLFAWLIVGGGAINYVIQSVIA</sequence>
<evidence type="ECO:0000250" key="1"/>
<evidence type="ECO:0000255" key="2"/>
<evidence type="ECO:0000305" key="3"/>